<protein>
    <recommendedName>
        <fullName>Inner capsid protein lambda-1</fullName>
        <shortName>Lambda1</shortName>
        <ecNumber>3.6.4.13</ecNumber>
    </recommendedName>
    <alternativeName>
        <fullName>ATP-dependent DNA helicase lambda-1</fullName>
    </alternativeName>
    <alternativeName>
        <fullName>Lambda1(Hel)</fullName>
    </alternativeName>
</protein>
<evidence type="ECO:0000250" key="1">
    <source>
        <dbReference type="UniProtKB" id="Q9WAB2"/>
    </source>
</evidence>
<evidence type="ECO:0000256" key="2">
    <source>
        <dbReference type="SAM" id="MobiDB-lite"/>
    </source>
</evidence>
<evidence type="ECO:0000269" key="3">
    <source>
    </source>
</evidence>
<evidence type="ECO:0000269" key="4">
    <source>
    </source>
</evidence>
<evidence type="ECO:0000305" key="5"/>
<organism>
    <name type="scientific">Reovirus type 3 (strain Dearing)</name>
    <name type="common">T3D</name>
    <name type="synonym">Mammalian orthoreovirus 3</name>
    <dbReference type="NCBI Taxonomy" id="10886"/>
    <lineage>
        <taxon>Viruses</taxon>
        <taxon>Riboviria</taxon>
        <taxon>Orthornavirae</taxon>
        <taxon>Duplornaviricota</taxon>
        <taxon>Resentoviricetes</taxon>
        <taxon>Reovirales</taxon>
        <taxon>Spinareoviridae</taxon>
        <taxon>Orthoreovirus</taxon>
        <taxon>Mammalian orthoreovirus</taxon>
    </lineage>
</organism>
<dbReference type="EC" id="3.6.4.13"/>
<dbReference type="EMBL" id="M23747">
    <property type="protein sequence ID" value="AAA47271.1"/>
    <property type="status" value="ALT_FRAME"/>
    <property type="molecule type" value="Genomic_RNA"/>
</dbReference>
<dbReference type="EMBL" id="AF129822">
    <property type="protein sequence ID" value="AAD42306.1"/>
    <property type="molecule type" value="mRNA"/>
</dbReference>
<dbReference type="EMBL" id="EF494437">
    <property type="protein sequence ID" value="ABP48915.1"/>
    <property type="molecule type" value="Genomic_RNA"/>
</dbReference>
<dbReference type="PIR" id="A31286">
    <property type="entry name" value="P3XRD3"/>
</dbReference>
<dbReference type="RefSeq" id="YP_010839454.1">
    <property type="nucleotide sequence ID" value="NC_077842.1"/>
</dbReference>
<dbReference type="PDB" id="1EJ6">
    <property type="method" value="X-ray"/>
    <property type="resolution" value="3.60 A"/>
    <property type="chains" value="B/C=1-1275"/>
</dbReference>
<dbReference type="PDBsum" id="1EJ6"/>
<dbReference type="EMDB" id="EMD-13149"/>
<dbReference type="EMDB" id="EMD-13150"/>
<dbReference type="SMR" id="P15024"/>
<dbReference type="GeneID" id="80549148"/>
<dbReference type="EvolutionaryTrace" id="P15024"/>
<dbReference type="Proteomes" id="UP000006373">
    <property type="component" value="Genome"/>
</dbReference>
<dbReference type="Proteomes" id="UP000165799">
    <property type="component" value="Genome"/>
</dbReference>
<dbReference type="GO" id="GO:0039625">
    <property type="term" value="C:viral inner capsid"/>
    <property type="evidence" value="ECO:0007669"/>
    <property type="project" value="UniProtKB-KW"/>
</dbReference>
<dbReference type="GO" id="GO:0005524">
    <property type="term" value="F:ATP binding"/>
    <property type="evidence" value="ECO:0007669"/>
    <property type="project" value="UniProtKB-KW"/>
</dbReference>
<dbReference type="GO" id="GO:0016887">
    <property type="term" value="F:ATP hydrolysis activity"/>
    <property type="evidence" value="ECO:0007669"/>
    <property type="project" value="RHEA"/>
</dbReference>
<dbReference type="GO" id="GO:0003724">
    <property type="term" value="F:RNA helicase activity"/>
    <property type="evidence" value="ECO:0007669"/>
    <property type="project" value="UniProtKB-EC"/>
</dbReference>
<dbReference type="GO" id="GO:0008270">
    <property type="term" value="F:zinc ion binding"/>
    <property type="evidence" value="ECO:0007669"/>
    <property type="project" value="UniProtKB-KW"/>
</dbReference>
<dbReference type="GO" id="GO:0006370">
    <property type="term" value="P:7-methylguanosine mRNA capping"/>
    <property type="evidence" value="ECO:0007669"/>
    <property type="project" value="UniProtKB-KW"/>
</dbReference>
<dbReference type="Gene3D" id="3.90.1830.10">
    <property type="entry name" value="Inner capsid protein lambda-1"/>
    <property type="match status" value="1"/>
</dbReference>
<dbReference type="InterPro" id="IPR054176">
    <property type="entry name" value="Lamba1_VP3"/>
</dbReference>
<dbReference type="InterPro" id="IPR044949">
    <property type="entry name" value="Lambda-1/VP3_sf"/>
</dbReference>
<dbReference type="InterPro" id="IPR013087">
    <property type="entry name" value="Znf_C2H2_type"/>
</dbReference>
<dbReference type="Pfam" id="PF22033">
    <property type="entry name" value="Lamba1_VP3"/>
    <property type="match status" value="1"/>
</dbReference>
<dbReference type="PROSITE" id="PS00028">
    <property type="entry name" value="ZINC_FINGER_C2H2_1"/>
    <property type="match status" value="1"/>
</dbReference>
<name>CAPSD_REOVD</name>
<accession>P15024</accession>
<accession>Q9WAB0</accession>
<sequence>MKRIPRKTKGKSSGKGNDSTERADDGSSQLRDKQNNKAGPATTEPGTSNREQYKARPGIASVQRATESAEMPMKNNDEGTPDKKGNTKGDLVNEHSEAKDEADEATKKQAKDTDKSKAQVTYSDTGINNANELSRSGNVDNEGGSNQKPMSTRIAEATSAIVSKHPARVGLPPTASSGHGYQCHVCSAVLFSPLDLDAHVASHGLHGNMTLTSSDIQRHITEFISSWQNHPIVQVSADVENKKTAQLLHADTPRLVTWDAGLCTSFKIVPIVPAQVPQDVLAYTFFTSSYAIQSPFPEAAVSRIVVHTRWASNVDFDRDSSVIMAPPTENNIHLFKQLLNTETLSVRGANPLMFRANVLHMLLEFVLDNLYLNRHTGFSQDHTPFTEGANLRSLPGPDAEKWYSIMYPTRMGTPNVSKICNFVASCVRNRVGRFDRAQMMNGAMSEWVDVFETSDALTVSIRGRWMARLARMNINPTEIEWALTECAQGYVTVTSPYAPIVNRLMPYRISNAERQISQIIRIMNIGNNATVIQPVLQDISVLLQRISPLQIDPTIISNTMSTVSESTTQTLSPASSILGKLRPSNSDFSSFRVALAGWLYNGVVTTVIDDSSYPKDGGSVTSLENLWDFFILALALPLTTDPCAPVKAFMTLANMMVGFETIPMDNQIYTQSRRASAFSTPHTWPRCFMNIQLISPIDAPILRQWAEIIHRYWPNPSQIRYGAPNVFGSANLFTPPEVLLLPIDHQPANVTTPTLDFTNELTNWRARVCELMKNLVDNQRYQPGWTQSLVSSMRGTLDKLKLIKSMTPMYLQQLAPVELAVIAPMLPFPPFQVPYVRLDRDRVPTMVGVTRQSRDTITQPALSLSTTNTTVGVPLALDARAITVALLSGKYPPDLVTNVWYADAIYPMYADTEVFSNLQRDMITCEAVQTLVTLVAQISETQYPVDRYLDWIPSLRASAATAATFAEWVNTSMKTAFDLSDMLLEPLLSGDPRMTQLAIQYQQYNGRTFNIIPEMPGSVIADCVQLTAEVFNHEYNLFGIARGDIIIGRVQSTHLWSPLAPPPDLVFDRDTPGVHIFGRDCRISFGMNGAAPMIRDETGLMVPFEGNWIFPLALWQMNTRYFNQQFDAWIKTGELRIRIEMGAYPYMLHYYDPRQYANAWNLTSAWLEEITPTSIPSVPFMVPISSDHDISSAPAVQYIISTEYNDRSLFCTNSSSPQTIAGPDKHIPVERYNILTNPDAPPTQIQLPEVVDLYNVVTRYAYETPPITAVVMGVP</sequence>
<gene>
    <name type="primary">L3</name>
</gene>
<comment type="function">
    <text evidence="3">Inner capsid protein that self-assembles to form an icosahedral capsid with a T=2 symmetry, which consists of 120 copies of VP2, with channels at each of its five-fold vertices. This capsid constitutes the innermost concentric layer of the viral mature particle.</text>
</comment>
<comment type="function">
    <text evidence="4">Displays NTPase, RNA 5'-triphosphatase (RTPase) and RNA helicase activities (PubMed:9218469). Helicase activity might be involved in unwinding or reannealing dsRNA during RNA synthesis. RTPase enzymatic activity represents the first step in RNA capping, which yields a 5'-diphosphorylated plus-strand RNA.</text>
</comment>
<comment type="catalytic activity">
    <reaction evidence="4">
        <text>ATP + H2O = ADP + phosphate + H(+)</text>
        <dbReference type="Rhea" id="RHEA:13065"/>
        <dbReference type="ChEBI" id="CHEBI:15377"/>
        <dbReference type="ChEBI" id="CHEBI:15378"/>
        <dbReference type="ChEBI" id="CHEBI:30616"/>
        <dbReference type="ChEBI" id="CHEBI:43474"/>
        <dbReference type="ChEBI" id="CHEBI:456216"/>
        <dbReference type="EC" id="3.6.4.13"/>
    </reaction>
</comment>
<comment type="cofactor">
    <cofactor evidence="4">
        <name>Mg(2+)</name>
        <dbReference type="ChEBI" id="CHEBI:18420"/>
    </cofactor>
    <cofactor evidence="4">
        <name>Mn(2+)</name>
        <dbReference type="ChEBI" id="CHEBI:29035"/>
    </cofactor>
</comment>
<comment type="subunit">
    <text evidence="1 3">Homodecamer; each decamer is made up of two conformers of VP2, called VP2A and VP2B. 12 homodecamers assemble to form an icosahedral capsid (PubMed:10801118). Interacts with protein mu-NS; in viral inclusions (By similarity).</text>
</comment>
<comment type="subcellular location">
    <subcellularLocation>
        <location>Virion</location>
    </subcellularLocation>
    <text evidence="3">Found in the inner capsid (120 copies).</text>
</comment>
<comment type="similarity">
    <text evidence="5">Belongs to the orthoreovirus lambda-1 protein family.</text>
</comment>
<comment type="sequence caution" evidence="5">
    <conflict type="frameshift">
        <sequence resource="EMBL-CDS" id="AAA47271"/>
    </conflict>
</comment>
<proteinExistence type="evidence at protein level"/>
<keyword id="KW-0002">3D-structure</keyword>
<keyword id="KW-0067">ATP-binding</keyword>
<keyword id="KW-0167">Capsid protein</keyword>
<keyword id="KW-0347">Helicase</keyword>
<keyword id="KW-0378">Hydrolase</keyword>
<keyword id="KW-1153">Inner capsid protein</keyword>
<keyword id="KW-0479">Metal-binding</keyword>
<keyword id="KW-0506">mRNA capping</keyword>
<keyword id="KW-0507">mRNA processing</keyword>
<keyword id="KW-0547">Nucleotide-binding</keyword>
<keyword id="KW-1141">T=2 icosahedral capsid protein</keyword>
<keyword id="KW-0946">Virion</keyword>
<keyword id="KW-0862">Zinc</keyword>
<keyword id="KW-0863">Zinc-finger</keyword>
<feature type="chain" id="PRO_0000222742" description="Inner capsid protein lambda-1">
    <location>
        <begin position="1"/>
        <end position="1275"/>
    </location>
</feature>
<feature type="zinc finger region" description="C2H2-type">
    <location>
        <begin position="181"/>
        <end position="203"/>
    </location>
</feature>
<feature type="region of interest" description="Disordered" evidence="2">
    <location>
        <begin position="1"/>
        <end position="149"/>
    </location>
</feature>
<feature type="compositionally biased region" description="Basic residues" evidence="2">
    <location>
        <begin position="1"/>
        <end position="12"/>
    </location>
</feature>
<feature type="compositionally biased region" description="Basic and acidic residues" evidence="2">
    <location>
        <begin position="18"/>
        <end position="35"/>
    </location>
</feature>
<feature type="compositionally biased region" description="Basic and acidic residues" evidence="2">
    <location>
        <begin position="75"/>
        <end position="117"/>
    </location>
</feature>
<feature type="compositionally biased region" description="Polar residues" evidence="2">
    <location>
        <begin position="118"/>
        <end position="149"/>
    </location>
</feature>
<feature type="sequence conflict" description="In Ref. 1; AAA47271." evidence="5" ref="1">
    <original>Q</original>
    <variation>L</variation>
    <location>
        <position position="119"/>
    </location>
</feature>
<feature type="sequence conflict" description="In Ref. 1; AAA47271." evidence="5" ref="1">
    <original>T</original>
    <variation>I</variation>
    <location>
        <position position="174"/>
    </location>
</feature>
<feature type="sequence conflict" description="In Ref. 1; AAA47271." evidence="5" ref="1">
    <original>SPYAPI</original>
    <variation>ILPPS</variation>
    <location>
        <begin position="495"/>
        <end position="500"/>
    </location>
</feature>
<feature type="sequence conflict" description="In Ref. 1; AAA47271." evidence="5" ref="1">
    <original>P</original>
    <variation>R</variation>
    <location>
        <position position="583"/>
    </location>
</feature>
<feature type="sequence conflict" description="In Ref. 1; AAA47271." evidence="5" ref="1">
    <original>A</original>
    <variation>V</variation>
    <location>
        <position position="648"/>
    </location>
</feature>
<feature type="sequence conflict" description="In Ref. 1; AAA47271." evidence="5" ref="1">
    <original>P</original>
    <variation>S</variation>
    <location>
        <position position="735"/>
    </location>
</feature>
<feature type="sequence conflict" description="In Ref. 1; AAA47271." evidence="5" ref="1">
    <original>Q</original>
    <variation>H</variation>
    <location>
        <position position="852"/>
    </location>
</feature>
<organismHost>
    <name type="scientific">Mammalia</name>
    <dbReference type="NCBI Taxonomy" id="40674"/>
</organismHost>
<reference key="1">
    <citation type="journal article" date="1988" name="Virology">
        <title>The sequence of the reovirus serotype 3 L3 genome segment which encodes the major core protein lambda 1.</title>
        <authorList>
            <person name="Bartlett J.A."/>
            <person name="Joklik W.K."/>
        </authorList>
    </citation>
    <scope>NUCLEOTIDE SEQUENCE [GENOMIC RNA]</scope>
</reference>
<reference key="2">
    <citation type="journal article" date="1999" name="Virology">
        <title>Mammalian reovirus L3 gene sequences and evidence for a distinct amino-terminal region of the lambda1 protein.</title>
        <authorList>
            <person name="Harrison S.J."/>
            <person name="Farsetta D.L."/>
            <person name="Kim J."/>
            <person name="Noble S."/>
            <person name="Broering T.J."/>
            <person name="Nibert M.L."/>
        </authorList>
    </citation>
    <scope>NUCLEOTIDE SEQUENCE [MRNA]</scope>
    <scope>IDENTIFICATION OF FRAMESHIFTS</scope>
</reference>
<reference key="3">
    <citation type="journal article" date="2007" name="Cell Host Microbe">
        <title>A plasmid-based reverse genetics system for animal double-stranded RNA viruses.</title>
        <authorList>
            <person name="Kobayashi T."/>
            <person name="Antar A.A."/>
            <person name="Boehme K.W."/>
            <person name="Danthi P."/>
            <person name="Eby E.A."/>
            <person name="Guglielmi K.M."/>
            <person name="Holm G.H."/>
            <person name="Johnson E.M."/>
            <person name="Maginnis M.S."/>
            <person name="Naik S."/>
            <person name="Skelton W.B."/>
            <person name="Wetzel J.D."/>
            <person name="Wilson G.J."/>
            <person name="Chappell J.D."/>
            <person name="Dermody T.S."/>
        </authorList>
    </citation>
    <scope>NUCLEOTIDE SEQUENCE [GENOMIC RNA]</scope>
    <source>
        <strain>Infectious clone</strain>
    </source>
</reference>
<reference key="4">
    <citation type="journal article" date="1997" name="J. Biol. Chem.">
        <title>Characterization of the nucleoside triphosphate phosphohydrolase and helicase activities of the reovirus lambda1 protein.</title>
        <authorList>
            <person name="Bisaillon M."/>
            <person name="Bergeron J."/>
            <person name="Lemay G."/>
        </authorList>
    </citation>
    <scope>CHARACTERIZATION OF HELICASE ACTIVITY</scope>
</reference>
<reference key="5">
    <citation type="journal article" date="2000" name="Nature">
        <title>Structure of the reovirus core at 3.6 A resolution.</title>
        <authorList>
            <person name="Reinisch K.M."/>
            <person name="Nibert M.L."/>
            <person name="Harrison S.C."/>
        </authorList>
    </citation>
    <scope>X-RAY CRYSTALLOGRAPHY (3.6 ANGSTROMS) OF 1-1233</scope>
    <scope>FUNCTION</scope>
    <scope>SUBCELLULAR LOCATION</scope>
    <source>
        <strain>Reassortant F18</strain>
    </source>
</reference>